<sequence length="235" mass="25799">MGRAFEYRRASKEARWDKMSKLFPKLAKAIQVAAKEGGTDPDMNPKLRSAIATAKANNMPKDNIDAAIKRASGKDSADIKNIHYEGKAAHGALVIVECMSDNPTRTVANVKAIFSKNGGEVLQNGSLGFMFTRKAVFHLEKFAGDLEELELDLIDAGLEELEQNEEELVISGDYTAFGELSSAIETKGLVLKKAGLEYIPNNPVSFSEEQLSDIEKLLDKLEDDDDVQAVYTNID</sequence>
<feature type="chain" id="PRO_1000045294" description="Probable transcriptional regulatory protein CJJ81176_1187">
    <location>
        <begin position="1"/>
        <end position="235"/>
    </location>
</feature>
<dbReference type="EMBL" id="CP000538">
    <property type="protein sequence ID" value="EAQ72265.1"/>
    <property type="molecule type" value="Genomic_DNA"/>
</dbReference>
<dbReference type="RefSeq" id="WP_002787769.1">
    <property type="nucleotide sequence ID" value="NC_008787.1"/>
</dbReference>
<dbReference type="SMR" id="A1W0F6"/>
<dbReference type="KEGG" id="cjj:CJJ81176_1187"/>
<dbReference type="eggNOG" id="COG0217">
    <property type="taxonomic scope" value="Bacteria"/>
</dbReference>
<dbReference type="HOGENOM" id="CLU_062974_2_2_7"/>
<dbReference type="Proteomes" id="UP000000646">
    <property type="component" value="Chromosome"/>
</dbReference>
<dbReference type="GO" id="GO:0005829">
    <property type="term" value="C:cytosol"/>
    <property type="evidence" value="ECO:0007669"/>
    <property type="project" value="TreeGrafter"/>
</dbReference>
<dbReference type="GO" id="GO:0003677">
    <property type="term" value="F:DNA binding"/>
    <property type="evidence" value="ECO:0007669"/>
    <property type="project" value="UniProtKB-UniRule"/>
</dbReference>
<dbReference type="GO" id="GO:0006355">
    <property type="term" value="P:regulation of DNA-templated transcription"/>
    <property type="evidence" value="ECO:0007669"/>
    <property type="project" value="UniProtKB-UniRule"/>
</dbReference>
<dbReference type="FunFam" id="1.10.10.200:FF:000004">
    <property type="entry name" value="Probable transcriptional regulatory protein BSBG_02618"/>
    <property type="match status" value="1"/>
</dbReference>
<dbReference type="Gene3D" id="1.10.10.200">
    <property type="match status" value="1"/>
</dbReference>
<dbReference type="Gene3D" id="3.30.70.980">
    <property type="match status" value="2"/>
</dbReference>
<dbReference type="HAMAP" id="MF_00693">
    <property type="entry name" value="Transcrip_reg_TACO1"/>
    <property type="match status" value="1"/>
</dbReference>
<dbReference type="InterPro" id="IPR017856">
    <property type="entry name" value="Integrase-like_N"/>
</dbReference>
<dbReference type="InterPro" id="IPR048300">
    <property type="entry name" value="TACO1_YebC-like_2nd/3rd_dom"/>
</dbReference>
<dbReference type="InterPro" id="IPR049083">
    <property type="entry name" value="TACO1_YebC_N"/>
</dbReference>
<dbReference type="InterPro" id="IPR002876">
    <property type="entry name" value="Transcrip_reg_TACO1-like"/>
</dbReference>
<dbReference type="InterPro" id="IPR026564">
    <property type="entry name" value="Transcrip_reg_TACO1-like_dom3"/>
</dbReference>
<dbReference type="InterPro" id="IPR029072">
    <property type="entry name" value="YebC-like"/>
</dbReference>
<dbReference type="NCBIfam" id="NF009044">
    <property type="entry name" value="PRK12378.1"/>
    <property type="match status" value="1"/>
</dbReference>
<dbReference type="NCBIfam" id="TIGR01033">
    <property type="entry name" value="YebC/PmpR family DNA-binding transcriptional regulator"/>
    <property type="match status" value="1"/>
</dbReference>
<dbReference type="PANTHER" id="PTHR12532:SF6">
    <property type="entry name" value="TRANSCRIPTIONAL REGULATORY PROTEIN YEBC-RELATED"/>
    <property type="match status" value="1"/>
</dbReference>
<dbReference type="PANTHER" id="PTHR12532">
    <property type="entry name" value="TRANSLATIONAL ACTIVATOR OF CYTOCHROME C OXIDASE 1"/>
    <property type="match status" value="1"/>
</dbReference>
<dbReference type="Pfam" id="PF20772">
    <property type="entry name" value="TACO1_YebC_N"/>
    <property type="match status" value="1"/>
</dbReference>
<dbReference type="Pfam" id="PF01709">
    <property type="entry name" value="Transcrip_reg"/>
    <property type="match status" value="1"/>
</dbReference>
<dbReference type="SUPFAM" id="SSF75625">
    <property type="entry name" value="YebC-like"/>
    <property type="match status" value="1"/>
</dbReference>
<proteinExistence type="inferred from homology"/>
<protein>
    <recommendedName>
        <fullName evidence="1">Probable transcriptional regulatory protein CJJ81176_1187</fullName>
    </recommendedName>
</protein>
<accession>A1W0F6</accession>
<reference key="1">
    <citation type="submission" date="2006-12" db="EMBL/GenBank/DDBJ databases">
        <authorList>
            <person name="Fouts D.E."/>
            <person name="Nelson K.E."/>
            <person name="Sebastian Y."/>
        </authorList>
    </citation>
    <scope>NUCLEOTIDE SEQUENCE [LARGE SCALE GENOMIC DNA]</scope>
    <source>
        <strain>81-176</strain>
    </source>
</reference>
<comment type="subcellular location">
    <subcellularLocation>
        <location evidence="1">Cytoplasm</location>
    </subcellularLocation>
</comment>
<comment type="similarity">
    <text evidence="1">Belongs to the TACO1 family.</text>
</comment>
<keyword id="KW-0963">Cytoplasm</keyword>
<keyword id="KW-0238">DNA-binding</keyword>
<keyword id="KW-0804">Transcription</keyword>
<keyword id="KW-0805">Transcription regulation</keyword>
<evidence type="ECO:0000255" key="1">
    <source>
        <dbReference type="HAMAP-Rule" id="MF_00693"/>
    </source>
</evidence>
<name>Y1187_CAMJJ</name>
<gene>
    <name type="ordered locus">CJJ81176_1187</name>
</gene>
<organism>
    <name type="scientific">Campylobacter jejuni subsp. jejuni serotype O:23/36 (strain 81-176)</name>
    <dbReference type="NCBI Taxonomy" id="354242"/>
    <lineage>
        <taxon>Bacteria</taxon>
        <taxon>Pseudomonadati</taxon>
        <taxon>Campylobacterota</taxon>
        <taxon>Epsilonproteobacteria</taxon>
        <taxon>Campylobacterales</taxon>
        <taxon>Campylobacteraceae</taxon>
        <taxon>Campylobacter</taxon>
    </lineage>
</organism>